<dbReference type="EMBL" id="AAFI02000190">
    <property type="protein sequence ID" value="EAL61214.1"/>
    <property type="molecule type" value="Genomic_DNA"/>
</dbReference>
<dbReference type="RefSeq" id="XP_629638.1">
    <property type="nucleotide sequence ID" value="XM_629636.1"/>
</dbReference>
<dbReference type="SMR" id="Q54D58"/>
<dbReference type="FunCoup" id="Q54D58">
    <property type="interactions" value="103"/>
</dbReference>
<dbReference type="STRING" id="44689.Q54D58"/>
<dbReference type="PaxDb" id="44689-DDB0235159"/>
<dbReference type="EnsemblProtists" id="EAL61214">
    <property type="protein sequence ID" value="EAL61214"/>
    <property type="gene ID" value="DDB_G0292470"/>
</dbReference>
<dbReference type="GeneID" id="8628702"/>
<dbReference type="KEGG" id="ddi:DDB_G0292470"/>
<dbReference type="dictyBase" id="DDB_G0292470">
    <property type="gene designation" value="anapc7"/>
</dbReference>
<dbReference type="VEuPathDB" id="AmoebaDB:DDB_G0292470"/>
<dbReference type="eggNOG" id="KOG1174">
    <property type="taxonomic scope" value="Eukaryota"/>
</dbReference>
<dbReference type="HOGENOM" id="CLU_026953_0_1_1"/>
<dbReference type="InParanoid" id="Q54D58"/>
<dbReference type="OMA" id="MGECYYY"/>
<dbReference type="PhylomeDB" id="Q54D58"/>
<dbReference type="Reactome" id="R-DDI-141430">
    <property type="pathway name" value="Inactivation of APC/C via direct inhibition of the APC/C complex"/>
</dbReference>
<dbReference type="Reactome" id="R-DDI-174048">
    <property type="pathway name" value="APC/C:Cdc20 mediated degradation of Cyclin B"/>
</dbReference>
<dbReference type="Reactome" id="R-DDI-174084">
    <property type="pathway name" value="Autodegradation of Cdh1 by Cdh1:APC/C"/>
</dbReference>
<dbReference type="Reactome" id="R-DDI-174154">
    <property type="pathway name" value="APC/C:Cdc20 mediated degradation of Securin"/>
</dbReference>
<dbReference type="Reactome" id="R-DDI-174178">
    <property type="pathway name" value="APC/C:Cdh1 mediated degradation of Cdc20 and other APC/C:Cdh1 targeted proteins in late mitosis/early G1"/>
</dbReference>
<dbReference type="Reactome" id="R-DDI-174184">
    <property type="pathway name" value="Cdc20:Phospho-APC/C mediated degradation of Cyclin A"/>
</dbReference>
<dbReference type="Reactome" id="R-DDI-176407">
    <property type="pathway name" value="Conversion from APC/C:Cdc20 to APC/C:Cdh1 in late anaphase"/>
</dbReference>
<dbReference type="Reactome" id="R-DDI-176408">
    <property type="pathway name" value="Regulation of APC/C activators between G1/S and early anaphase"/>
</dbReference>
<dbReference type="Reactome" id="R-DDI-176409">
    <property type="pathway name" value="APC/C:Cdc20 mediated degradation of mitotic proteins"/>
</dbReference>
<dbReference type="Reactome" id="R-DDI-176412">
    <property type="pathway name" value="Phosphorylation of the APC/C"/>
</dbReference>
<dbReference type="Reactome" id="R-DDI-179409">
    <property type="pathway name" value="APC-Cdc20 mediated degradation of Nek2A"/>
</dbReference>
<dbReference type="Reactome" id="R-DDI-2467813">
    <property type="pathway name" value="Separation of Sister Chromatids"/>
</dbReference>
<dbReference type="Reactome" id="R-DDI-2559582">
    <property type="pathway name" value="Senescence-Associated Secretory Phenotype (SASP)"/>
</dbReference>
<dbReference type="Reactome" id="R-DDI-69017">
    <property type="pathway name" value="CDK-mediated phosphorylation and removal of Cdc6"/>
</dbReference>
<dbReference type="Reactome" id="R-DDI-983168">
    <property type="pathway name" value="Antigen processing: Ubiquitination &amp; Proteasome degradation"/>
</dbReference>
<dbReference type="UniPathway" id="UPA00143"/>
<dbReference type="PRO" id="PR:Q54D58"/>
<dbReference type="Proteomes" id="UP000002195">
    <property type="component" value="Chromosome 6"/>
</dbReference>
<dbReference type="GO" id="GO:0005634">
    <property type="term" value="C:nucleus"/>
    <property type="evidence" value="ECO:0007669"/>
    <property type="project" value="UniProtKB-SubCell"/>
</dbReference>
<dbReference type="GO" id="GO:0051301">
    <property type="term" value="P:cell division"/>
    <property type="evidence" value="ECO:0000318"/>
    <property type="project" value="GO_Central"/>
</dbReference>
<dbReference type="GO" id="GO:0016567">
    <property type="term" value="P:protein ubiquitination"/>
    <property type="evidence" value="ECO:0007669"/>
    <property type="project" value="UniProtKB-UniPathway"/>
</dbReference>
<dbReference type="Gene3D" id="1.25.40.10">
    <property type="entry name" value="Tetratricopeptide repeat domain"/>
    <property type="match status" value="4"/>
</dbReference>
<dbReference type="InterPro" id="IPR011990">
    <property type="entry name" value="TPR-like_helical_dom_sf"/>
</dbReference>
<dbReference type="InterPro" id="IPR019734">
    <property type="entry name" value="TPR_rpt"/>
</dbReference>
<dbReference type="PANTHER" id="PTHR12558:SF42">
    <property type="entry name" value="ANAPHASE-PROMOTING COMPLEX SUBUNIT 7"/>
    <property type="match status" value="1"/>
</dbReference>
<dbReference type="PANTHER" id="PTHR12558">
    <property type="entry name" value="CELL DIVISION CYCLE 16,23,27"/>
    <property type="match status" value="1"/>
</dbReference>
<dbReference type="Pfam" id="PF13181">
    <property type="entry name" value="TPR_8"/>
    <property type="match status" value="1"/>
</dbReference>
<dbReference type="SMART" id="SM00028">
    <property type="entry name" value="TPR"/>
    <property type="match status" value="6"/>
</dbReference>
<dbReference type="SUPFAM" id="SSF48452">
    <property type="entry name" value="TPR-like"/>
    <property type="match status" value="2"/>
</dbReference>
<dbReference type="PROSITE" id="PS50005">
    <property type="entry name" value="TPR"/>
    <property type="match status" value="3"/>
</dbReference>
<dbReference type="PROSITE" id="PS50293">
    <property type="entry name" value="TPR_REGION"/>
    <property type="match status" value="2"/>
</dbReference>
<reference key="1">
    <citation type="journal article" date="2005" name="Nature">
        <title>The genome of the social amoeba Dictyostelium discoideum.</title>
        <authorList>
            <person name="Eichinger L."/>
            <person name="Pachebat J.A."/>
            <person name="Gloeckner G."/>
            <person name="Rajandream M.A."/>
            <person name="Sucgang R."/>
            <person name="Berriman M."/>
            <person name="Song J."/>
            <person name="Olsen R."/>
            <person name="Szafranski K."/>
            <person name="Xu Q."/>
            <person name="Tunggal B."/>
            <person name="Kummerfeld S."/>
            <person name="Madera M."/>
            <person name="Konfortov B.A."/>
            <person name="Rivero F."/>
            <person name="Bankier A.T."/>
            <person name="Lehmann R."/>
            <person name="Hamlin N."/>
            <person name="Davies R."/>
            <person name="Gaudet P."/>
            <person name="Fey P."/>
            <person name="Pilcher K."/>
            <person name="Chen G."/>
            <person name="Saunders D."/>
            <person name="Sodergren E.J."/>
            <person name="Davis P."/>
            <person name="Kerhornou A."/>
            <person name="Nie X."/>
            <person name="Hall N."/>
            <person name="Anjard C."/>
            <person name="Hemphill L."/>
            <person name="Bason N."/>
            <person name="Farbrother P."/>
            <person name="Desany B."/>
            <person name="Just E."/>
            <person name="Morio T."/>
            <person name="Rost R."/>
            <person name="Churcher C.M."/>
            <person name="Cooper J."/>
            <person name="Haydock S."/>
            <person name="van Driessche N."/>
            <person name="Cronin A."/>
            <person name="Goodhead I."/>
            <person name="Muzny D.M."/>
            <person name="Mourier T."/>
            <person name="Pain A."/>
            <person name="Lu M."/>
            <person name="Harper D."/>
            <person name="Lindsay R."/>
            <person name="Hauser H."/>
            <person name="James K.D."/>
            <person name="Quiles M."/>
            <person name="Madan Babu M."/>
            <person name="Saito T."/>
            <person name="Buchrieser C."/>
            <person name="Wardroper A."/>
            <person name="Felder M."/>
            <person name="Thangavelu M."/>
            <person name="Johnson D."/>
            <person name="Knights A."/>
            <person name="Loulseged H."/>
            <person name="Mungall K.L."/>
            <person name="Oliver K."/>
            <person name="Price C."/>
            <person name="Quail M.A."/>
            <person name="Urushihara H."/>
            <person name="Hernandez J."/>
            <person name="Rabbinowitsch E."/>
            <person name="Steffen D."/>
            <person name="Sanders M."/>
            <person name="Ma J."/>
            <person name="Kohara Y."/>
            <person name="Sharp S."/>
            <person name="Simmonds M.N."/>
            <person name="Spiegler S."/>
            <person name="Tivey A."/>
            <person name="Sugano S."/>
            <person name="White B."/>
            <person name="Walker D."/>
            <person name="Woodward J.R."/>
            <person name="Winckler T."/>
            <person name="Tanaka Y."/>
            <person name="Shaulsky G."/>
            <person name="Schleicher M."/>
            <person name="Weinstock G.M."/>
            <person name="Rosenthal A."/>
            <person name="Cox E.C."/>
            <person name="Chisholm R.L."/>
            <person name="Gibbs R.A."/>
            <person name="Loomis W.F."/>
            <person name="Platzer M."/>
            <person name="Kay R.R."/>
            <person name="Williams J.G."/>
            <person name="Dear P.H."/>
            <person name="Noegel A.A."/>
            <person name="Barrell B.G."/>
            <person name="Kuspa A."/>
        </authorList>
    </citation>
    <scope>NUCLEOTIDE SEQUENCE [LARGE SCALE GENOMIC DNA]</scope>
    <source>
        <strain>AX4</strain>
    </source>
</reference>
<accession>Q54D58</accession>
<protein>
    <recommendedName>
        <fullName>Anaphase-promoting complex subunit 7</fullName>
        <shortName>APC7</shortName>
    </recommendedName>
</protein>
<organism>
    <name type="scientific">Dictyostelium discoideum</name>
    <name type="common">Social amoeba</name>
    <dbReference type="NCBI Taxonomy" id="44689"/>
    <lineage>
        <taxon>Eukaryota</taxon>
        <taxon>Amoebozoa</taxon>
        <taxon>Evosea</taxon>
        <taxon>Eumycetozoa</taxon>
        <taxon>Dictyostelia</taxon>
        <taxon>Dictyosteliales</taxon>
        <taxon>Dictyosteliaceae</taxon>
        <taxon>Dictyostelium</taxon>
    </lineage>
</organism>
<evidence type="ECO:0000250" key="1"/>
<evidence type="ECO:0000256" key="2">
    <source>
        <dbReference type="SAM" id="MobiDB-lite"/>
    </source>
</evidence>
<evidence type="ECO:0000305" key="3"/>
<gene>
    <name type="primary">anapc7</name>
    <name type="synonym">apc7</name>
    <name type="ORF">DDB_G0292470</name>
</gene>
<feature type="chain" id="PRO_0000328206" description="Anaphase-promoting complex subunit 7">
    <location>
        <begin position="1"/>
        <end position="580"/>
    </location>
</feature>
<feature type="repeat" description="TPR 1">
    <location>
        <begin position="50"/>
        <end position="83"/>
    </location>
</feature>
<feature type="repeat" description="TPR 2">
    <location>
        <begin position="107"/>
        <end position="140"/>
    </location>
</feature>
<feature type="repeat" description="TPR 3">
    <location>
        <begin position="141"/>
        <end position="175"/>
    </location>
</feature>
<feature type="repeat" description="TPR 4">
    <location>
        <begin position="253"/>
        <end position="286"/>
    </location>
</feature>
<feature type="repeat" description="TPR 5">
    <location>
        <begin position="321"/>
        <end position="354"/>
    </location>
</feature>
<feature type="repeat" description="TPR 6">
    <location>
        <begin position="356"/>
        <end position="388"/>
    </location>
</feature>
<feature type="repeat" description="TPR 7">
    <location>
        <begin position="390"/>
        <end position="421"/>
    </location>
</feature>
<feature type="repeat" description="TPR 8">
    <location>
        <begin position="422"/>
        <end position="456"/>
    </location>
</feature>
<feature type="repeat" description="TPR 9">
    <location>
        <begin position="458"/>
        <end position="490"/>
    </location>
</feature>
<feature type="repeat" description="TPR 10">
    <location>
        <begin position="491"/>
        <end position="523"/>
    </location>
</feature>
<feature type="region of interest" description="Disordered" evidence="2">
    <location>
        <begin position="539"/>
        <end position="580"/>
    </location>
</feature>
<feature type="compositionally biased region" description="Acidic residues" evidence="2">
    <location>
        <begin position="542"/>
        <end position="580"/>
    </location>
</feature>
<comment type="function">
    <text evidence="1">Component of the anaphase promoting complex/cyclosome (APC/C), a cell cycle-regulated E3 ubiquitin-protein ligase complex that controls progression through mitosis and the G1 phase of the cell cycle.</text>
</comment>
<comment type="pathway">
    <text>Protein modification; protein ubiquitination.</text>
</comment>
<comment type="subunit">
    <text evidence="1">The APC/C is composed of at least 13 subunits that stay tightly associated throughout the cell cycle: anapc1, anapc2, anapc3, anapc4, anapc5, anapc6, anapc7, anapc8, anapc10, anapc11, cdc20, cdc26 and cdh1.</text>
</comment>
<comment type="subcellular location">
    <subcellularLocation>
        <location evidence="1">Nucleus</location>
    </subcellularLocation>
</comment>
<comment type="similarity">
    <text evidence="3">Belongs to the APC7 family.</text>
</comment>
<proteinExistence type="inferred from homology"/>
<keyword id="KW-0131">Cell cycle</keyword>
<keyword id="KW-0132">Cell division</keyword>
<keyword id="KW-0498">Mitosis</keyword>
<keyword id="KW-0539">Nucleus</keyword>
<keyword id="KW-1185">Reference proteome</keyword>
<keyword id="KW-0677">Repeat</keyword>
<keyword id="KW-0802">TPR repeat</keyword>
<keyword id="KW-0833">Ubl conjugation pathway</keyword>
<sequence length="580" mass="66851">MIQQLPMVNVELMISNLRILVESKQFSSAEFLGNFVISVPNQQKTPHQNIISFSLFGDSLFGKNEFVRSLKYFKQSLDILFKVYNNPNNNNNNNNKQADFDNKQFEYELKYKISLCYIKINRNNLAISYLESIPFSSRGLDTHLTIARLYKDIGKEKSKECIISYKEVIKLCPLCLEAINSLKEMGENVDQVLIPSINKFQQKNNSFNSNNIIDLSWISLLSMSQYEMKRNQPEKSLILLKKVESKFSTNLYVLEKLALSYLYHDEPSIINTFNIFQKIRLLDPYYIGSMDIFCSLLKRRSLQFELNKVCNDLVASNPYCAETWTSVALFYFLKENVEKSLENVDRAISIKESHEFAHSLKGEILLSLDEPREALPSLERAFQLSKNILTARELVRCHLILNQMKEALVVAETINNLSPDYSKTMALLGMVLANQPEEREEARKILTKALTLSPHCTDTVLTLSKLNVVEGRFQEAIDILNSQLEYQETDLMHTEIAGVYLTKDYHEDAMIHYNSALEINPQYEPASRGIARLELIMKGIDPDQELDQENDDDDQEEGEGENDQEENDDDDNDDDDEYIS</sequence>
<name>APC7_DICDI</name>